<feature type="chain" id="PRO_0000391915" description="Probable ATP-dependent RNA helicase spindle-E">
    <location>
        <begin position="1"/>
        <end position="1434"/>
    </location>
</feature>
<feature type="domain" description="Helicase ATP-binding" evidence="2">
    <location>
        <begin position="127"/>
        <end position="294"/>
    </location>
</feature>
<feature type="domain" description="Helicase C-terminal" evidence="3">
    <location>
        <begin position="354"/>
        <end position="526"/>
    </location>
</feature>
<feature type="domain" description="Tudor">
    <location>
        <begin position="938"/>
        <end position="1001"/>
    </location>
</feature>
<feature type="region of interest" description="Disordered" evidence="4">
    <location>
        <begin position="66"/>
        <end position="86"/>
    </location>
</feature>
<feature type="short sequence motif" description="DEAH box">
    <location>
        <begin position="240"/>
        <end position="243"/>
    </location>
</feature>
<feature type="binding site" evidence="2">
    <location>
        <begin position="140"/>
        <end position="147"/>
    </location>
    <ligand>
        <name>ATP</name>
        <dbReference type="ChEBI" id="CHEBI:30616"/>
    </ligand>
</feature>
<comment type="function">
    <text evidence="1">Probable ATP-binding RNA helicase which plays a central role during spermatogenesis and oogenesis by repressing transposable elements and preventing their mobilization, which is essential for the germline integrity. Acts via the piRNA metabolic process, which mediates the repression of transposable elements during meiosis by forming complexes composed of piRNAs and Piwi and govern the methylation and subsequent repression of transposons. Involved in the repression of LTR retrotransposon copia. Also involved in telomere regulation by repressing specialized telomeric retroelements HeT-A, TAHRE, and TART; Drosophila telomeres being maintained by transposition of specialized telomeric retroelements. Involved in telomeric trans-silencing, a repression mechanism by which a transposon or a transgene inserted in subtelomeric heterochromatin has the capacity to repress in trans in the female germline, a homologous transposon, or transgene located in euchromatin. Involved in the repression of testis-expressed Stellate genes by the homologous Su(Ste) repeats. Required for anteroposterior and dorsoventral axis formation during oogenesis (By similarity).</text>
</comment>
<comment type="catalytic activity">
    <reaction>
        <text>ATP + H2O = ADP + phosphate + H(+)</text>
        <dbReference type="Rhea" id="RHEA:13065"/>
        <dbReference type="ChEBI" id="CHEBI:15377"/>
        <dbReference type="ChEBI" id="CHEBI:15378"/>
        <dbReference type="ChEBI" id="CHEBI:30616"/>
        <dbReference type="ChEBI" id="CHEBI:43474"/>
        <dbReference type="ChEBI" id="CHEBI:456216"/>
        <dbReference type="EC" id="3.6.4.13"/>
    </reaction>
</comment>
<comment type="subcellular location">
    <subcellularLocation>
        <location evidence="1">Cytoplasm</location>
    </subcellularLocation>
    <text evidence="1">Component of the nuage, also named P granule, a germ-cell-specific organelle required to repress transposon during meiosis.</text>
</comment>
<comment type="similarity">
    <text evidence="5">Belongs to the DEAD box helicase family. DEAH subfamily.</text>
</comment>
<reference key="1">
    <citation type="journal article" date="2007" name="Nature">
        <title>Evolution of genes and genomes on the Drosophila phylogeny.</title>
        <authorList>
            <consortium name="Drosophila 12 genomes consortium"/>
        </authorList>
    </citation>
    <scope>NUCLEOTIDE SEQUENCE [LARGE SCALE GENOMIC DNA]</scope>
    <source>
        <strain>Tucson 15287-2541.00</strain>
    </source>
</reference>
<accession>B4JT42</accession>
<name>SPNE_DROGR</name>
<dbReference type="EC" id="3.6.4.13"/>
<dbReference type="EMBL" id="CH916373">
    <property type="protein sequence ID" value="EDV94932.1"/>
    <property type="molecule type" value="Genomic_DNA"/>
</dbReference>
<dbReference type="SMR" id="B4JT42"/>
<dbReference type="FunCoup" id="B4JT42">
    <property type="interactions" value="171"/>
</dbReference>
<dbReference type="STRING" id="7222.B4JT42"/>
<dbReference type="EnsemblMetazoa" id="FBtr0158865">
    <property type="protein sequence ID" value="FBpp0157357"/>
    <property type="gene ID" value="FBgn0130908"/>
</dbReference>
<dbReference type="EnsemblMetazoa" id="XM_001994160.3">
    <property type="protein sequence ID" value="XP_001994196.1"/>
    <property type="gene ID" value="LOC6567215"/>
</dbReference>
<dbReference type="GeneID" id="6567215"/>
<dbReference type="KEGG" id="dgr:6567215"/>
<dbReference type="eggNOG" id="KOG0920">
    <property type="taxonomic scope" value="Eukaryota"/>
</dbReference>
<dbReference type="HOGENOM" id="CLU_002601_1_0_1"/>
<dbReference type="InParanoid" id="B4JT42"/>
<dbReference type="OMA" id="QRSAYCS"/>
<dbReference type="OrthoDB" id="66977at2759"/>
<dbReference type="PhylomeDB" id="B4JT42"/>
<dbReference type="Proteomes" id="UP000001070">
    <property type="component" value="Unassembled WGS sequence"/>
</dbReference>
<dbReference type="GO" id="GO:0005737">
    <property type="term" value="C:cytoplasm"/>
    <property type="evidence" value="ECO:0007669"/>
    <property type="project" value="UniProtKB-SubCell"/>
</dbReference>
<dbReference type="GO" id="GO:0005524">
    <property type="term" value="F:ATP binding"/>
    <property type="evidence" value="ECO:0007669"/>
    <property type="project" value="UniProtKB-KW"/>
</dbReference>
<dbReference type="GO" id="GO:0016887">
    <property type="term" value="F:ATP hydrolysis activity"/>
    <property type="evidence" value="ECO:0007669"/>
    <property type="project" value="RHEA"/>
</dbReference>
<dbReference type="GO" id="GO:0003723">
    <property type="term" value="F:RNA binding"/>
    <property type="evidence" value="ECO:0007669"/>
    <property type="project" value="TreeGrafter"/>
</dbReference>
<dbReference type="GO" id="GO:0003724">
    <property type="term" value="F:RNA helicase activity"/>
    <property type="evidence" value="ECO:0007669"/>
    <property type="project" value="UniProtKB-EC"/>
</dbReference>
<dbReference type="GO" id="GO:0051321">
    <property type="term" value="P:meiotic cell cycle"/>
    <property type="evidence" value="ECO:0007669"/>
    <property type="project" value="UniProtKB-KW"/>
</dbReference>
<dbReference type="GO" id="GO:0048477">
    <property type="term" value="P:oogenesis"/>
    <property type="evidence" value="ECO:0007669"/>
    <property type="project" value="UniProtKB-KW"/>
</dbReference>
<dbReference type="GO" id="GO:0031047">
    <property type="term" value="P:regulatory ncRNA-mediated gene silencing"/>
    <property type="evidence" value="ECO:0007669"/>
    <property type="project" value="UniProtKB-KW"/>
</dbReference>
<dbReference type="GO" id="GO:0007283">
    <property type="term" value="P:spermatogenesis"/>
    <property type="evidence" value="ECO:0007669"/>
    <property type="project" value="UniProtKB-KW"/>
</dbReference>
<dbReference type="CDD" id="cd18791">
    <property type="entry name" value="SF2_C_RHA"/>
    <property type="match status" value="1"/>
</dbReference>
<dbReference type="FunFam" id="3.40.50.300:FF:001676">
    <property type="entry name" value="DExH-box ATP-dependent RNA helicase DExH7 chloroplastic"/>
    <property type="match status" value="1"/>
</dbReference>
<dbReference type="Gene3D" id="1.20.120.1080">
    <property type="match status" value="1"/>
</dbReference>
<dbReference type="Gene3D" id="2.30.30.140">
    <property type="match status" value="1"/>
</dbReference>
<dbReference type="Gene3D" id="2.40.50.90">
    <property type="match status" value="1"/>
</dbReference>
<dbReference type="Gene3D" id="3.40.50.300">
    <property type="entry name" value="P-loop containing nucleotide triphosphate hydrolases"/>
    <property type="match status" value="2"/>
</dbReference>
<dbReference type="InterPro" id="IPR011545">
    <property type="entry name" value="DEAD/DEAH_box_helicase_dom"/>
</dbReference>
<dbReference type="InterPro" id="IPR007502">
    <property type="entry name" value="Helicase-assoc_dom"/>
</dbReference>
<dbReference type="InterPro" id="IPR014001">
    <property type="entry name" value="Helicase_ATP-bd"/>
</dbReference>
<dbReference type="InterPro" id="IPR001650">
    <property type="entry name" value="Helicase_C-like"/>
</dbReference>
<dbReference type="InterPro" id="IPR027417">
    <property type="entry name" value="P-loop_NTPase"/>
</dbReference>
<dbReference type="InterPro" id="IPR035437">
    <property type="entry name" value="SNase_OB-fold_sf"/>
</dbReference>
<dbReference type="InterPro" id="IPR002999">
    <property type="entry name" value="Tudor"/>
</dbReference>
<dbReference type="InterPro" id="IPR013087">
    <property type="entry name" value="Znf_C2H2_type"/>
</dbReference>
<dbReference type="PANTHER" id="PTHR18934">
    <property type="entry name" value="ATP-DEPENDENT RNA HELICASE"/>
    <property type="match status" value="1"/>
</dbReference>
<dbReference type="PANTHER" id="PTHR18934:SF113">
    <property type="entry name" value="ATP-DEPENDENT RNA HELICASE TDRD9"/>
    <property type="match status" value="1"/>
</dbReference>
<dbReference type="Pfam" id="PF00270">
    <property type="entry name" value="DEAD"/>
    <property type="match status" value="1"/>
</dbReference>
<dbReference type="Pfam" id="PF21010">
    <property type="entry name" value="HA2_C"/>
    <property type="match status" value="1"/>
</dbReference>
<dbReference type="Pfam" id="PF00271">
    <property type="entry name" value="Helicase_C"/>
    <property type="match status" value="1"/>
</dbReference>
<dbReference type="Pfam" id="PF00567">
    <property type="entry name" value="TUDOR"/>
    <property type="match status" value="1"/>
</dbReference>
<dbReference type="SMART" id="SM00487">
    <property type="entry name" value="DEXDc"/>
    <property type="match status" value="1"/>
</dbReference>
<dbReference type="SMART" id="SM00847">
    <property type="entry name" value="HA2"/>
    <property type="match status" value="1"/>
</dbReference>
<dbReference type="SMART" id="SM00490">
    <property type="entry name" value="HELICc"/>
    <property type="match status" value="1"/>
</dbReference>
<dbReference type="SUPFAM" id="SSF52540">
    <property type="entry name" value="P-loop containing nucleoside triphosphate hydrolases"/>
    <property type="match status" value="1"/>
</dbReference>
<dbReference type="SUPFAM" id="SSF63748">
    <property type="entry name" value="Tudor/PWWP/MBT"/>
    <property type="match status" value="1"/>
</dbReference>
<dbReference type="PROSITE" id="PS51192">
    <property type="entry name" value="HELICASE_ATP_BIND_1"/>
    <property type="match status" value="1"/>
</dbReference>
<dbReference type="PROSITE" id="PS51194">
    <property type="entry name" value="HELICASE_CTER"/>
    <property type="match status" value="1"/>
</dbReference>
<gene>
    <name type="primary">spn-E</name>
    <name type="synonym">hls</name>
    <name type="ORF">GH23451</name>
</gene>
<evidence type="ECO:0000250" key="1"/>
<evidence type="ECO:0000255" key="2">
    <source>
        <dbReference type="PROSITE-ProRule" id="PRU00541"/>
    </source>
</evidence>
<evidence type="ECO:0000255" key="3">
    <source>
        <dbReference type="PROSITE-ProRule" id="PRU00542"/>
    </source>
</evidence>
<evidence type="ECO:0000256" key="4">
    <source>
        <dbReference type="SAM" id="MobiDB-lite"/>
    </source>
</evidence>
<evidence type="ECO:0000305" key="5"/>
<organism>
    <name type="scientific">Drosophila grimshawi</name>
    <name type="common">Hawaiian fruit fly</name>
    <name type="synonym">Idiomyia grimshawi</name>
    <dbReference type="NCBI Taxonomy" id="7222"/>
    <lineage>
        <taxon>Eukaryota</taxon>
        <taxon>Metazoa</taxon>
        <taxon>Ecdysozoa</taxon>
        <taxon>Arthropoda</taxon>
        <taxon>Hexapoda</taxon>
        <taxon>Insecta</taxon>
        <taxon>Pterygota</taxon>
        <taxon>Neoptera</taxon>
        <taxon>Endopterygota</taxon>
        <taxon>Diptera</taxon>
        <taxon>Brachycera</taxon>
        <taxon>Muscomorpha</taxon>
        <taxon>Ephydroidea</taxon>
        <taxon>Drosophilidae</taxon>
        <taxon>Drosophila</taxon>
        <taxon>Hawaiian Drosophila</taxon>
    </lineage>
</organism>
<protein>
    <recommendedName>
        <fullName>Probable ATP-dependent RNA helicase spindle-E</fullName>
        <ecNumber>3.6.4.13</ecNumber>
    </recommendedName>
    <alternativeName>
        <fullName>Homeless</fullName>
    </alternativeName>
</protein>
<sequence>MDDLMDFFDSSKNFKRGTLPRGCISGDPNAYTSESSDSKPIKREIIGTKDVNEIVQKEQQLMNQLVGGPSNTKRTKTLDELESDDDDKMELNEAPTVRSDEAFYEKYHFDLNRNRSLPIYAQREQIMKAIKENPVVILKGETGCGKTTQVPQYILDEAFKKREFCNIVVTQPRRIAAISIANRVCQERRWQPGTVCSYQVGLHKQSNSADTRLLYCTTGVLLNNLIRLKTLTHYTHIVLDEVHDRDQDMDFLLIVVRRLLALNSRHVKVILMSATIDTREFCKYFASCKSMPPVVAASHGRKYPLVKYYRDQLKNINWKTEPQQREPGITHEGYRDAVKILLVIDNMERKAEGQSEQSYEEAKRTGSVLIFLPGVNEIDTMAEHIEHVMNESPNIKITIVRCHSLMSSDSQEDVFQPPLSGHRKVILTTNIAESSITVTDVSYVIDFCLAKVMHIDTASNFSCLCLEWASKVNCRQRAGRVGRTRSGRVYRMVTKAFYMEEMQEFGIPEMLRSPLQSSVLKAKELDMGGPSEILALAMSPPNLTDIHNTVLLLKEVGALYTTVDGVYEQLDGDLTYWGTIMSRFPLDVRLSRLIILGYIFNCLDEAIIIAAGMSVRSLYLSGQRQRTSDAFWMHYIFADGSGSDLVGFWRVYKIYVNMCQNLPMKDSEVQWARRYNVSLRSLKEMYLLVQELQKRCAALNLVSLPVGASHMWHDREKSIILKVIIAGAFYPNYFTRNNKTIPDYDRDVYHSICGNDPCRTVYFTQFVPRYMGELYTRRVKELFLEARIPPEKIDVTFQQGSEKIFVTFKGDDDDYMNSTDVVQVPGRVTTEVYKAIRMRMNNPNRSLRVMDQNSALKYVQQRNIGVVQDSKWVPPSKQWNVELLTLPSVFDKKITGLITYIVNCGKFYFQPRSLAERIASMTEIFNAPEQLSYHVRNASAITKGLQLLARRGSKFQRAVVLKVEPQSNAIPQFLVRFIDYGDWALLAMDQLRLMRHELRRDLEELPPRMFECRLALVQPSSVTSYSNRWPQKANEMLSKLASCGPLELEVYSLVNNVAAVLIHMRDGVLNDKLVEHQLARRADEDYMSRKDHDFRIRKQKMKRYVPAAEQQQVNEEYLRFNQLPQDADLEPPPLDKCHTSIRLKGPYSPLENSMNSMLRIGMYKSVAIEKESVNAVLLDADPQDRHDQMIVAASVTESDGNDKLVARGTTLMPNIHGFGALMAMLFCPTMQIKCNPERTKYVCLLAGLGFNPDTLEPYFQEHDMVINLDVGILKDDIRIINQMRYNIDSMFFNFDANELPAVGVEGRLVIFNQLRNLLTRLLGKDRSFIERHVWNSKYVWEDMSDLEPPSEPYGKRAIFPMHGSYDLESEDMGNLLALQENCSELYDWQNFDGVMQPRNCRLCNETLESVTQLRLHLLTQLHRDREKQVGWKQQ</sequence>
<keyword id="KW-0067">ATP-binding</keyword>
<keyword id="KW-0963">Cytoplasm</keyword>
<keyword id="KW-0217">Developmental protein</keyword>
<keyword id="KW-0221">Differentiation</keyword>
<keyword id="KW-0347">Helicase</keyword>
<keyword id="KW-0378">Hydrolase</keyword>
<keyword id="KW-0469">Meiosis</keyword>
<keyword id="KW-0547">Nucleotide-binding</keyword>
<keyword id="KW-0896">Oogenesis</keyword>
<keyword id="KW-1185">Reference proteome</keyword>
<keyword id="KW-0943">RNA-mediated gene silencing</keyword>
<keyword id="KW-0744">Spermatogenesis</keyword>
<proteinExistence type="inferred from homology"/>